<comment type="function">
    <text evidence="1">Protein S19 forms a complex with S13 that binds strongly to the 16S ribosomal RNA.</text>
</comment>
<comment type="similarity">
    <text evidence="1">Belongs to the universal ribosomal protein uS19 family.</text>
</comment>
<evidence type="ECO:0000255" key="1">
    <source>
        <dbReference type="HAMAP-Rule" id="MF_00531"/>
    </source>
</evidence>
<evidence type="ECO:0000305" key="2"/>
<name>RS19_METKA</name>
<dbReference type="EMBL" id="AE009439">
    <property type="protein sequence ID" value="AAM02203.1"/>
    <property type="molecule type" value="Genomic_DNA"/>
</dbReference>
<dbReference type="RefSeq" id="WP_011019358.1">
    <property type="nucleotide sequence ID" value="NC_003551.1"/>
</dbReference>
<dbReference type="SMR" id="Q8TWP2"/>
<dbReference type="FunCoup" id="Q8TWP2">
    <property type="interactions" value="132"/>
</dbReference>
<dbReference type="STRING" id="190192.MK0990"/>
<dbReference type="PaxDb" id="190192-MK0990"/>
<dbReference type="EnsemblBacteria" id="AAM02203">
    <property type="protein sequence ID" value="AAM02203"/>
    <property type="gene ID" value="MK0990"/>
</dbReference>
<dbReference type="GeneID" id="1477091"/>
<dbReference type="KEGG" id="mka:MK0990"/>
<dbReference type="PATRIC" id="fig|190192.8.peg.1037"/>
<dbReference type="HOGENOM" id="CLU_097347_1_0_2"/>
<dbReference type="InParanoid" id="Q8TWP2"/>
<dbReference type="OrthoDB" id="30559at2157"/>
<dbReference type="Proteomes" id="UP000001826">
    <property type="component" value="Chromosome"/>
</dbReference>
<dbReference type="GO" id="GO:0022627">
    <property type="term" value="C:cytosolic small ribosomal subunit"/>
    <property type="evidence" value="ECO:0007669"/>
    <property type="project" value="TreeGrafter"/>
</dbReference>
<dbReference type="GO" id="GO:0019843">
    <property type="term" value="F:rRNA binding"/>
    <property type="evidence" value="ECO:0007669"/>
    <property type="project" value="UniProtKB-UniRule"/>
</dbReference>
<dbReference type="GO" id="GO:0003735">
    <property type="term" value="F:structural constituent of ribosome"/>
    <property type="evidence" value="ECO:0007669"/>
    <property type="project" value="InterPro"/>
</dbReference>
<dbReference type="GO" id="GO:0000028">
    <property type="term" value="P:ribosomal small subunit assembly"/>
    <property type="evidence" value="ECO:0007669"/>
    <property type="project" value="TreeGrafter"/>
</dbReference>
<dbReference type="GO" id="GO:0006412">
    <property type="term" value="P:translation"/>
    <property type="evidence" value="ECO:0007669"/>
    <property type="project" value="UniProtKB-UniRule"/>
</dbReference>
<dbReference type="FunFam" id="3.30.860.10:FF:000002">
    <property type="entry name" value="40S ribosomal protein S15"/>
    <property type="match status" value="1"/>
</dbReference>
<dbReference type="Gene3D" id="3.30.860.10">
    <property type="entry name" value="30s Ribosomal Protein S19, Chain A"/>
    <property type="match status" value="1"/>
</dbReference>
<dbReference type="HAMAP" id="MF_00531">
    <property type="entry name" value="Ribosomal_uS19"/>
    <property type="match status" value="1"/>
</dbReference>
<dbReference type="InterPro" id="IPR002222">
    <property type="entry name" value="Ribosomal_uS19"/>
</dbReference>
<dbReference type="InterPro" id="IPR020934">
    <property type="entry name" value="Ribosomal_uS19_CS"/>
</dbReference>
<dbReference type="InterPro" id="IPR005713">
    <property type="entry name" value="Ribosomal_uS19_euk/arc"/>
</dbReference>
<dbReference type="InterPro" id="IPR023575">
    <property type="entry name" value="Ribosomal_uS19_SF"/>
</dbReference>
<dbReference type="NCBIfam" id="NF003121">
    <property type="entry name" value="PRK04038.1"/>
    <property type="match status" value="1"/>
</dbReference>
<dbReference type="NCBIfam" id="TIGR01025">
    <property type="entry name" value="uS19_arch"/>
    <property type="match status" value="1"/>
</dbReference>
<dbReference type="PANTHER" id="PTHR11880">
    <property type="entry name" value="RIBOSOMAL PROTEIN S19P FAMILY MEMBER"/>
    <property type="match status" value="1"/>
</dbReference>
<dbReference type="PANTHER" id="PTHR11880:SF2">
    <property type="entry name" value="SMALL RIBOSOMAL SUBUNIT PROTEIN US19"/>
    <property type="match status" value="1"/>
</dbReference>
<dbReference type="Pfam" id="PF00203">
    <property type="entry name" value="Ribosomal_S19"/>
    <property type="match status" value="1"/>
</dbReference>
<dbReference type="PIRSF" id="PIRSF002144">
    <property type="entry name" value="Ribosomal_S19"/>
    <property type="match status" value="1"/>
</dbReference>
<dbReference type="PRINTS" id="PR00975">
    <property type="entry name" value="RIBOSOMALS19"/>
</dbReference>
<dbReference type="SUPFAM" id="SSF54570">
    <property type="entry name" value="Ribosomal protein S19"/>
    <property type="match status" value="1"/>
</dbReference>
<dbReference type="PROSITE" id="PS00323">
    <property type="entry name" value="RIBOSOMAL_S19"/>
    <property type="match status" value="1"/>
</dbReference>
<reference key="1">
    <citation type="journal article" date="2002" name="Proc. Natl. Acad. Sci. U.S.A.">
        <title>The complete genome of hyperthermophile Methanopyrus kandleri AV19 and monophyly of archaeal methanogens.</title>
        <authorList>
            <person name="Slesarev A.I."/>
            <person name="Mezhevaya K.V."/>
            <person name="Makarova K.S."/>
            <person name="Polushin N.N."/>
            <person name="Shcherbinina O.V."/>
            <person name="Shakhova V.V."/>
            <person name="Belova G.I."/>
            <person name="Aravind L."/>
            <person name="Natale D.A."/>
            <person name="Rogozin I.B."/>
            <person name="Tatusov R.L."/>
            <person name="Wolf Y.I."/>
            <person name="Stetter K.O."/>
            <person name="Malykh A.G."/>
            <person name="Koonin E.V."/>
            <person name="Kozyavkin S.A."/>
        </authorList>
    </citation>
    <scope>NUCLEOTIDE SEQUENCE [LARGE SCALE GENOMIC DNA]</scope>
    <source>
        <strain>AV19 / DSM 6324 / JCM 9639 / NBRC 100938</strain>
    </source>
</reference>
<sequence length="149" mass="17655">MAEERSKDDIPDWWEKEWVEFRYRGYTLGELMKMPIEEFIELLPARQRRSLKRGLPSRHKKLLRKVRRARRLLRRGKKPPVIRTHCRDMIILPEMVGLTIAVYNGKEFKEVKIEPEMIGHYLGEFAKTRKTVEHGGIGATRSSLFVPLK</sequence>
<accession>Q8TWP2</accession>
<keyword id="KW-1185">Reference proteome</keyword>
<keyword id="KW-0687">Ribonucleoprotein</keyword>
<keyword id="KW-0689">Ribosomal protein</keyword>
<keyword id="KW-0694">RNA-binding</keyword>
<keyword id="KW-0699">rRNA-binding</keyword>
<proteinExistence type="inferred from homology"/>
<gene>
    <name evidence="1" type="primary">rps19</name>
    <name type="ordered locus">MK0990</name>
</gene>
<feature type="chain" id="PRO_0000130003" description="Small ribosomal subunit protein uS19">
    <location>
        <begin position="1"/>
        <end position="149"/>
    </location>
</feature>
<protein>
    <recommendedName>
        <fullName evidence="1">Small ribosomal subunit protein uS19</fullName>
    </recommendedName>
    <alternativeName>
        <fullName evidence="2">30S ribosomal protein S19</fullName>
    </alternativeName>
</protein>
<organism>
    <name type="scientific">Methanopyrus kandleri (strain AV19 / DSM 6324 / JCM 9639 / NBRC 100938)</name>
    <dbReference type="NCBI Taxonomy" id="190192"/>
    <lineage>
        <taxon>Archaea</taxon>
        <taxon>Methanobacteriati</taxon>
        <taxon>Methanobacteriota</taxon>
        <taxon>Methanomada group</taxon>
        <taxon>Methanopyri</taxon>
        <taxon>Methanopyrales</taxon>
        <taxon>Methanopyraceae</taxon>
        <taxon>Methanopyrus</taxon>
    </lineage>
</organism>